<comment type="function">
    <text evidence="1">Catalyzes the transfer of the L-Ara4N moiety of the glycolipid undecaprenyl phosphate-alpha-L-Ara4N to lipid A. The modified arabinose is attached to lipid A and is required for resistance to polymyxin and cationic antimicrobial peptides.</text>
</comment>
<comment type="catalytic activity">
    <reaction evidence="1">
        <text>4-amino-4-deoxy-alpha-L-arabinopyranosyl di-trans,octa-cis-undecaprenyl phosphate + lipid IVA = lipid IIA + di-trans,octa-cis-undecaprenyl phosphate.</text>
        <dbReference type="EC" id="2.4.2.43"/>
    </reaction>
</comment>
<comment type="pathway">
    <text evidence="1">Lipopolysaccharide metabolism; 4-amino-4-deoxy-beta-L-arabinose-lipid A biosynthesis.</text>
</comment>
<comment type="subcellular location">
    <subcellularLocation>
        <location evidence="1">Cell inner membrane</location>
        <topology evidence="1">Multi-pass membrane protein</topology>
    </subcellularLocation>
</comment>
<comment type="similarity">
    <text evidence="1">Belongs to the glycosyltransferase 83 family.</text>
</comment>
<name>ARNT_ECOSE</name>
<sequence length="550" mass="62544">MKSVRYLIGLFAFIACYYLLPISTRLLWQPDETRYAEISREMLASGDWIVPHLLGLRYFEKPIAGYWINSIGQWLFGANNFGVRAGVIFATLLTAALVTWFTLRLWRDKRLALLATVIYLSLFIVYAIGTYAVLDPFIAFWLVAGMCSFWLAMQAQTWKGKSAGFLLLGITCGMGVMTKGFLALAVPVLSVLPWVATQKRWKDLFIYGWLAVISCVLTVLPWGLAIAQREPDFWHYFFWVEHIQRFALDDAQHRAPFWYYVPVIIAGSLPWLGLLPGALYTGWKNRKHSATVYLLSWTIMPLLFFSVAKGKLPTYILSCFASLAMLMAHYALLAAKNNPLALRINGWINIAFGVTGIIATFVVSPWGPMNTPVWQTFESYKVFCAWSIFSLWAFFGWYTLTNVEKTWPFAALCPLGLALLVGFSIPDRVMEGKHPQFFVEMTQESLQPSRYILTDSVGVAAGLAWSLQRDDIIMYRQTGELKYGLNYPDAKGRFVSGDEFANWLNQHRQEGIITLVLSVDRDEDINSLAIPPADAIDRQERLVLIQYRPK</sequence>
<feature type="chain" id="PRO_0000380008" description="Undecaprenyl phosphate-alpha-4-amino-4-deoxy-L-arabinose arabinosyl transferase">
    <location>
        <begin position="1"/>
        <end position="550"/>
    </location>
</feature>
<feature type="transmembrane region" description="Helical" evidence="1">
    <location>
        <begin position="7"/>
        <end position="27"/>
    </location>
</feature>
<feature type="transmembrane region" description="Helical" evidence="1">
    <location>
        <begin position="81"/>
        <end position="101"/>
    </location>
</feature>
<feature type="transmembrane region" description="Helical" evidence="1">
    <location>
        <begin position="111"/>
        <end position="133"/>
    </location>
</feature>
<feature type="transmembrane region" description="Helical" evidence="1">
    <location>
        <begin position="137"/>
        <end position="154"/>
    </location>
</feature>
<feature type="transmembrane region" description="Helical" evidence="1">
    <location>
        <begin position="165"/>
        <end position="185"/>
    </location>
</feature>
<feature type="transmembrane region" description="Helical" evidence="1">
    <location>
        <begin position="204"/>
        <end position="224"/>
    </location>
</feature>
<feature type="transmembrane region" description="Helical" evidence="1">
    <location>
        <begin position="255"/>
        <end position="275"/>
    </location>
</feature>
<feature type="transmembrane region" description="Helical" evidence="1">
    <location>
        <begin position="288"/>
        <end position="308"/>
    </location>
</feature>
<feature type="transmembrane region" description="Helical" evidence="1">
    <location>
        <begin position="315"/>
        <end position="335"/>
    </location>
</feature>
<feature type="transmembrane region" description="Helical" evidence="1">
    <location>
        <begin position="346"/>
        <end position="366"/>
    </location>
</feature>
<feature type="transmembrane region" description="Helical" evidence="1">
    <location>
        <begin position="382"/>
        <end position="402"/>
    </location>
</feature>
<feature type="transmembrane region" description="Helical" evidence="1">
    <location>
        <begin position="406"/>
        <end position="426"/>
    </location>
</feature>
<gene>
    <name evidence="1" type="primary">arnT</name>
    <name type="ordered locus">ECSE_2516</name>
</gene>
<accession>B6I7K0</accession>
<organism>
    <name type="scientific">Escherichia coli (strain SE11)</name>
    <dbReference type="NCBI Taxonomy" id="409438"/>
    <lineage>
        <taxon>Bacteria</taxon>
        <taxon>Pseudomonadati</taxon>
        <taxon>Pseudomonadota</taxon>
        <taxon>Gammaproteobacteria</taxon>
        <taxon>Enterobacterales</taxon>
        <taxon>Enterobacteriaceae</taxon>
        <taxon>Escherichia</taxon>
    </lineage>
</organism>
<reference key="1">
    <citation type="journal article" date="2008" name="DNA Res.">
        <title>Complete genome sequence and comparative analysis of the wild-type commensal Escherichia coli strain SE11 isolated from a healthy adult.</title>
        <authorList>
            <person name="Oshima K."/>
            <person name="Toh H."/>
            <person name="Ogura Y."/>
            <person name="Sasamoto H."/>
            <person name="Morita H."/>
            <person name="Park S.-H."/>
            <person name="Ooka T."/>
            <person name="Iyoda S."/>
            <person name="Taylor T.D."/>
            <person name="Hayashi T."/>
            <person name="Itoh K."/>
            <person name="Hattori M."/>
        </authorList>
    </citation>
    <scope>NUCLEOTIDE SEQUENCE [LARGE SCALE GENOMIC DNA]</scope>
    <source>
        <strain>SE11</strain>
    </source>
</reference>
<evidence type="ECO:0000255" key="1">
    <source>
        <dbReference type="HAMAP-Rule" id="MF_01165"/>
    </source>
</evidence>
<proteinExistence type="inferred from homology"/>
<keyword id="KW-0997">Cell inner membrane</keyword>
<keyword id="KW-1003">Cell membrane</keyword>
<keyword id="KW-0328">Glycosyltransferase</keyword>
<keyword id="KW-0441">Lipid A biosynthesis</keyword>
<keyword id="KW-0444">Lipid biosynthesis</keyword>
<keyword id="KW-0443">Lipid metabolism</keyword>
<keyword id="KW-0448">Lipopolysaccharide biosynthesis</keyword>
<keyword id="KW-0472">Membrane</keyword>
<keyword id="KW-0808">Transferase</keyword>
<keyword id="KW-0812">Transmembrane</keyword>
<keyword id="KW-1133">Transmembrane helix</keyword>
<protein>
    <recommendedName>
        <fullName evidence="1">Undecaprenyl phosphate-alpha-4-amino-4-deoxy-L-arabinose arabinosyl transferase</fullName>
        <ecNumber evidence="1">2.4.2.43</ecNumber>
    </recommendedName>
    <alternativeName>
        <fullName evidence="1">4-amino-4-deoxy-L-arabinose lipid A transferase</fullName>
    </alternativeName>
    <alternativeName>
        <fullName evidence="1">Lipid IV(A) 4-amino-4-deoxy-L-arabinosyltransferase</fullName>
    </alternativeName>
    <alternativeName>
        <fullName evidence="1">Undecaprenyl phosphate-alpha-L-Ara4N transferase</fullName>
    </alternativeName>
</protein>
<dbReference type="EC" id="2.4.2.43" evidence="1"/>
<dbReference type="EMBL" id="AP009240">
    <property type="protein sequence ID" value="BAG78040.1"/>
    <property type="molecule type" value="Genomic_DNA"/>
</dbReference>
<dbReference type="RefSeq" id="WP_000844046.1">
    <property type="nucleotide sequence ID" value="NC_011415.1"/>
</dbReference>
<dbReference type="SMR" id="B6I7K0"/>
<dbReference type="CAZy" id="GT83">
    <property type="family name" value="Glycosyltransferase Family 83"/>
</dbReference>
<dbReference type="KEGG" id="ecy:ECSE_2516"/>
<dbReference type="HOGENOM" id="CLU_019200_2_1_6"/>
<dbReference type="UniPathway" id="UPA00037"/>
<dbReference type="Proteomes" id="UP000008199">
    <property type="component" value="Chromosome"/>
</dbReference>
<dbReference type="GO" id="GO:0005886">
    <property type="term" value="C:plasma membrane"/>
    <property type="evidence" value="ECO:0007669"/>
    <property type="project" value="UniProtKB-SubCell"/>
</dbReference>
<dbReference type="GO" id="GO:0103015">
    <property type="term" value="F:4-amino-4-deoxy-L-arabinose transferase activity"/>
    <property type="evidence" value="ECO:0007669"/>
    <property type="project" value="UniProtKB-EC"/>
</dbReference>
<dbReference type="GO" id="GO:0000030">
    <property type="term" value="F:mannosyltransferase activity"/>
    <property type="evidence" value="ECO:0007669"/>
    <property type="project" value="InterPro"/>
</dbReference>
<dbReference type="GO" id="GO:0009245">
    <property type="term" value="P:lipid A biosynthetic process"/>
    <property type="evidence" value="ECO:0007669"/>
    <property type="project" value="UniProtKB-UniRule"/>
</dbReference>
<dbReference type="GO" id="GO:0009103">
    <property type="term" value="P:lipopolysaccharide biosynthetic process"/>
    <property type="evidence" value="ECO:0007669"/>
    <property type="project" value="UniProtKB-KW"/>
</dbReference>
<dbReference type="GO" id="GO:0006493">
    <property type="term" value="P:protein O-linked glycosylation"/>
    <property type="evidence" value="ECO:0007669"/>
    <property type="project" value="InterPro"/>
</dbReference>
<dbReference type="GO" id="GO:0010041">
    <property type="term" value="P:response to iron(III) ion"/>
    <property type="evidence" value="ECO:0007669"/>
    <property type="project" value="TreeGrafter"/>
</dbReference>
<dbReference type="HAMAP" id="MF_01165">
    <property type="entry name" value="ArnT_transfer"/>
    <property type="match status" value="1"/>
</dbReference>
<dbReference type="InterPro" id="IPR022839">
    <property type="entry name" value="ArnT_tfrase"/>
</dbReference>
<dbReference type="InterPro" id="IPR003342">
    <property type="entry name" value="Glyco_trans_39/83"/>
</dbReference>
<dbReference type="InterPro" id="IPR050297">
    <property type="entry name" value="LipidA_mod_glycosyltrf_83"/>
</dbReference>
<dbReference type="NCBIfam" id="NF009784">
    <property type="entry name" value="PRK13279.1"/>
    <property type="match status" value="1"/>
</dbReference>
<dbReference type="PANTHER" id="PTHR33908">
    <property type="entry name" value="MANNOSYLTRANSFERASE YKCB-RELATED"/>
    <property type="match status" value="1"/>
</dbReference>
<dbReference type="PANTHER" id="PTHR33908:SF3">
    <property type="entry name" value="UNDECAPRENYL PHOSPHATE-ALPHA-4-AMINO-4-DEOXY-L-ARABINOSE ARABINOSYL TRANSFERASE"/>
    <property type="match status" value="1"/>
</dbReference>
<dbReference type="Pfam" id="PF02366">
    <property type="entry name" value="PMT"/>
    <property type="match status" value="1"/>
</dbReference>